<sequence>MRITQGTFSFLPDLTDAQITSQLEYCLNQGWAVGIEYTDDPHPRNTYWEMFGLPMFDLRDAAGILLEINNARSTFPNHYIRVTAFDSTHTVESVVMSFIVNRPADEPGFRLVRQEEPGRTIRYSIESYAVQARPEGSRY</sequence>
<protein>
    <recommendedName>
        <fullName evidence="2">Ribulose bisphosphate carboxylase small subunit, plasmid</fullName>
        <shortName evidence="1">RuBisCO small subunit</shortName>
    </recommendedName>
</protein>
<evidence type="ECO:0000255" key="1">
    <source>
        <dbReference type="HAMAP-Rule" id="MF_00859"/>
    </source>
</evidence>
<evidence type="ECO:0000303" key="2">
    <source>
    </source>
</evidence>
<evidence type="ECO:0000305" key="3"/>
<keyword id="KW-0113">Calvin cycle</keyword>
<keyword id="KW-0120">Carbon dioxide fixation</keyword>
<keyword id="KW-0614">Plasmid</keyword>
<keyword id="KW-1185">Reference proteome</keyword>
<organism>
    <name type="scientific">Cupriavidus necator (strain ATCC 17699 / DSM 428 / KCTC 22496 / NCIMB 10442 / H16 / Stanier 337)</name>
    <name type="common">Ralstonia eutropha</name>
    <dbReference type="NCBI Taxonomy" id="381666"/>
    <lineage>
        <taxon>Bacteria</taxon>
        <taxon>Pseudomonadati</taxon>
        <taxon>Pseudomonadota</taxon>
        <taxon>Betaproteobacteria</taxon>
        <taxon>Burkholderiales</taxon>
        <taxon>Burkholderiaceae</taxon>
        <taxon>Cupriavidus</taxon>
    </lineage>
</organism>
<dbReference type="EMBL" id="U20584">
    <property type="protein sequence ID" value="AAA83746.1"/>
    <property type="molecule type" value="Genomic_DNA"/>
</dbReference>
<dbReference type="EMBL" id="U20585">
    <property type="protein sequence ID" value="AAA83748.1"/>
    <property type="molecule type" value="Genomic_DNA"/>
</dbReference>
<dbReference type="EMBL" id="AY305378">
    <property type="protein sequence ID" value="AAP86175.1"/>
    <property type="molecule type" value="Genomic_DNA"/>
</dbReference>
<dbReference type="PIR" id="I39558">
    <property type="entry name" value="I39558"/>
</dbReference>
<dbReference type="PIR" id="I39560">
    <property type="entry name" value="I39560"/>
</dbReference>
<dbReference type="RefSeq" id="WP_011154338.1">
    <property type="nucleotide sequence ID" value="NC_005241.1"/>
</dbReference>
<dbReference type="SMR" id="Q59102"/>
<dbReference type="STRING" id="381666.H16_B1394"/>
<dbReference type="KEGG" id="reh:PHG426"/>
<dbReference type="PATRIC" id="fig|381666.6.peg.354"/>
<dbReference type="eggNOG" id="COG4451">
    <property type="taxonomic scope" value="Bacteria"/>
</dbReference>
<dbReference type="HOGENOM" id="CLU_098114_2_0_4"/>
<dbReference type="OrthoDB" id="9788955at2"/>
<dbReference type="Proteomes" id="UP000008210">
    <property type="component" value="Plasmid megaplasmid pHG1"/>
</dbReference>
<dbReference type="GO" id="GO:0016984">
    <property type="term" value="F:ribulose-bisphosphate carboxylase activity"/>
    <property type="evidence" value="ECO:0007669"/>
    <property type="project" value="UniProtKB-UniRule"/>
</dbReference>
<dbReference type="GO" id="GO:0019253">
    <property type="term" value="P:reductive pentose-phosphate cycle"/>
    <property type="evidence" value="ECO:0007669"/>
    <property type="project" value="UniProtKB-UniRule"/>
</dbReference>
<dbReference type="CDD" id="cd03527">
    <property type="entry name" value="RuBisCO_small"/>
    <property type="match status" value="1"/>
</dbReference>
<dbReference type="Gene3D" id="3.30.190.10">
    <property type="entry name" value="Ribulose bisphosphate carboxylase, small subunit"/>
    <property type="match status" value="1"/>
</dbReference>
<dbReference type="HAMAP" id="MF_00859">
    <property type="entry name" value="RuBisCO_S_bact"/>
    <property type="match status" value="1"/>
</dbReference>
<dbReference type="InterPro" id="IPR024681">
    <property type="entry name" value="RuBisCO_ssu"/>
</dbReference>
<dbReference type="InterPro" id="IPR000894">
    <property type="entry name" value="RuBisCO_ssu_dom"/>
</dbReference>
<dbReference type="InterPro" id="IPR036385">
    <property type="entry name" value="RuBisCO_ssu_sf"/>
</dbReference>
<dbReference type="PANTHER" id="PTHR31262">
    <property type="entry name" value="RIBULOSE BISPHOSPHATE CARBOXYLASE SMALL CHAIN 1, CHLOROPLASTIC"/>
    <property type="match status" value="1"/>
</dbReference>
<dbReference type="PANTHER" id="PTHR31262:SF23">
    <property type="entry name" value="RIBULOSE BISPHOSPHATE CARBOXYLASE SMALL SUBUNIT"/>
    <property type="match status" value="1"/>
</dbReference>
<dbReference type="Pfam" id="PF00101">
    <property type="entry name" value="RuBisCO_small"/>
    <property type="match status" value="1"/>
</dbReference>
<dbReference type="SMART" id="SM00961">
    <property type="entry name" value="RuBisCO_small"/>
    <property type="match status" value="1"/>
</dbReference>
<dbReference type="SUPFAM" id="SSF55239">
    <property type="entry name" value="RuBisCO, small subunit"/>
    <property type="match status" value="1"/>
</dbReference>
<proteinExistence type="inferred from homology"/>
<feature type="chain" id="PRO_0000198608" description="Ribulose bisphosphate carboxylase small subunit, plasmid">
    <location>
        <begin position="1"/>
        <end position="139"/>
    </location>
</feature>
<feature type="sequence conflict" description="In Ref. 1; AAA83746." evidence="3" ref="1">
    <original>D</original>
    <variation>E</variation>
    <location>
        <position position="105"/>
    </location>
</feature>
<feature type="sequence conflict" description="In Ref. 1; AAA83746." evidence="3" ref="1">
    <original>I</original>
    <variation>M</variation>
    <location>
        <position position="121"/>
    </location>
</feature>
<accession>Q59102</accession>
<accession>Q59103</accession>
<comment type="function">
    <text evidence="1">RuBisCO catalyzes two reactions: the carboxylation of D-ribulose 1,5-bisphosphate, the primary event in carbon dioxide fixation, as well as the oxidative fragmentation of the pentose substrate. Both reactions occur simultaneously and in competition at the same active site. Although the small subunit is not catalytic it is essential for maximal activity.</text>
</comment>
<comment type="subunit">
    <text evidence="1">Heterohexadecamer of 8 large and 8 small subunits.</text>
</comment>
<comment type="miscellaneous">
    <text evidence="1">The basic functional RuBisCO is composed of a large chain homodimer in a 'head-to-tail' conformation. In form I RuBisCO this homodimer is arranged in a barrel-like tetramer with the small subunits forming a tetrameric 'cap' on each end of the 'barrel'.</text>
</comment>
<comment type="similarity">
    <text evidence="1">Belongs to the RuBisCO small chain family.</text>
</comment>
<reference key="1">
    <citation type="journal article" date="1995" name="J. Bacteriol.">
        <title>Characterization of the duplicate ribulose-1,5-bisphosphate carboxylase genes and cbb promoters of Alcaligenes eutrophus.</title>
        <authorList>
            <person name="Kusian B."/>
            <person name="Bednarski R."/>
            <person name="Husemann M."/>
            <person name="Bowien B."/>
        </authorList>
    </citation>
    <scope>NUCLEOTIDE SEQUENCE [GENOMIC DNA]</scope>
</reference>
<reference key="2">
    <citation type="journal article" date="2003" name="J. Mol. Biol.">
        <title>Complete nucleotide sequence of pHG1: a Ralstonia eutropha H16 megaplasmid encoding key enzymes of H(2)-based lithoautotrophy and anaerobiosis.</title>
        <authorList>
            <person name="Schwartz E."/>
            <person name="Henne A."/>
            <person name="Cramm R."/>
            <person name="Eitinger T."/>
            <person name="Friedrich B."/>
            <person name="Gottschalk G."/>
        </authorList>
    </citation>
    <scope>NUCLEOTIDE SEQUENCE [LARGE SCALE GENOMIC DNA]</scope>
    <source>
        <strain>ATCC 17699 / DSM 428 / KCTC 22496 / NCIMB 10442 / H16 / Stanier 337</strain>
    </source>
</reference>
<gene>
    <name evidence="1" type="primary">cbbS</name>
    <name type="synonym">cbbSP</name>
    <name type="synonym">cbxSP</name>
    <name type="synonym">cfxSP</name>
    <name type="synonym">rbcS</name>
    <name type="ordered locus">PHG426</name>
</gene>
<name>RBSP_CUPNH</name>
<geneLocation type="plasmid">
    <name>megaplasmid pHG1</name>
</geneLocation>